<keyword id="KW-0175">Coiled coil</keyword>
<keyword id="KW-0413">Isomerase</keyword>
<keyword id="KW-0539">Nucleus</keyword>
<keyword id="KW-1185">Reference proteome</keyword>
<keyword id="KW-0687">Ribonucleoprotein</keyword>
<keyword id="KW-0690">Ribosome biogenesis</keyword>
<keyword id="KW-0694">RNA-binding</keyword>
<keyword id="KW-0698">rRNA processing</keyword>
<evidence type="ECO:0000250" key="1">
    <source>
        <dbReference type="UniProtKB" id="O60832"/>
    </source>
</evidence>
<evidence type="ECO:0000250" key="2">
    <source>
        <dbReference type="UniProtKB" id="P40615"/>
    </source>
</evidence>
<evidence type="ECO:0000250" key="3">
    <source>
        <dbReference type="UniProtKB" id="P60340"/>
    </source>
</evidence>
<evidence type="ECO:0000255" key="4"/>
<evidence type="ECO:0000255" key="5">
    <source>
        <dbReference type="PROSITE-ProRule" id="PRU00161"/>
    </source>
</evidence>
<evidence type="ECO:0000256" key="6">
    <source>
        <dbReference type="SAM" id="MobiDB-lite"/>
    </source>
</evidence>
<evidence type="ECO:0000305" key="7"/>
<reference key="1">
    <citation type="journal article" date="2005" name="Genome Biol.">
        <title>Full-length cDNAs from chicken bursal lymphocytes to facilitate gene function analysis.</title>
        <authorList>
            <person name="Caldwell R.B."/>
            <person name="Kierzek A.M."/>
            <person name="Arakawa H."/>
            <person name="Bezzubov Y."/>
            <person name="Zaim J."/>
            <person name="Fiedler P."/>
            <person name="Kutter S."/>
            <person name="Blagodatski A."/>
            <person name="Kostovska D."/>
            <person name="Koter M."/>
            <person name="Plachy J."/>
            <person name="Carninci P."/>
            <person name="Hayashizaki Y."/>
            <person name="Buerstedde J.-M."/>
        </authorList>
    </citation>
    <scope>NUCLEOTIDE SEQUENCE [LARGE SCALE MRNA]</scope>
    <source>
        <strain>CB</strain>
        <tissue>Bursa of Fabricius</tissue>
    </source>
</reference>
<name>DKC1_CHICK</name>
<sequence length="516" mass="58150">MADGDGSSVKKRRKKDKRSLPDEDVADIQHTEEFLIKPESRVAQLDTSQWPLLLKNFDKLNVLTTHYTPLPSGANPLKREISDYVRSGFINLDKPSNPSSHEVVAWIRRILRVEKTGHSGTLDPKVTGCLIVCIERATRLVKSQQSAGKEYVGIVRLHNAIESEAQLARAIETLTGALFQRPPLIAAVKRQLRVRTIYESKLVEYDPERRLGIFWVSCEAGTYIRTLCVHLGLLLGVGGQMQELRRVRSGILGEMDNMVTMHDVLDAQWQYDNNKDDSYLRRVILPLEKLLTSHKRLVMKDSAVNAICYGAKIMLPGVLRYEDGIELKQEIVVITTKGEAICLAIALMTTAVISTCDHGVVAKIKRVIMERDTYPRKWGLGPKASQKKMMIQKGLLDKHGKPNECTPDSWKKEYVDYRESSKKEAAKVPQAVSEVERAPKRKRESESENEAVSPPPSPATPPPEELSKKEKKKKKKEKKAKEAAESGEEQVEVISESSAKKKKKKKKQKEVEESSE</sequence>
<gene>
    <name type="primary">DKC1</name>
    <name type="ORF">RCJMB04_17p9</name>
</gene>
<dbReference type="EC" id="5.4.99.-" evidence="1"/>
<dbReference type="EMBL" id="AJ720455">
    <property type="protein sequence ID" value="CAG32114.1"/>
    <property type="molecule type" value="mRNA"/>
</dbReference>
<dbReference type="RefSeq" id="NP_001026286.1">
    <property type="nucleotide sequence ID" value="NM_001031115.1"/>
</dbReference>
<dbReference type="SMR" id="Q5ZJH9"/>
<dbReference type="FunCoup" id="Q5ZJH9">
    <property type="interactions" value="2119"/>
</dbReference>
<dbReference type="STRING" id="9031.ENSGALP00000008091"/>
<dbReference type="GlyGen" id="Q5ZJH9">
    <property type="glycosylation" value="1 site"/>
</dbReference>
<dbReference type="PaxDb" id="9031-ENSGALP00000008091"/>
<dbReference type="GeneID" id="422196"/>
<dbReference type="KEGG" id="gga:422196"/>
<dbReference type="CTD" id="1736"/>
<dbReference type="VEuPathDB" id="HostDB:geneid_422196"/>
<dbReference type="eggNOG" id="KOG2529">
    <property type="taxonomic scope" value="Eukaryota"/>
</dbReference>
<dbReference type="InParanoid" id="Q5ZJH9"/>
<dbReference type="OrthoDB" id="10250002at2759"/>
<dbReference type="PhylomeDB" id="Q5ZJH9"/>
<dbReference type="Reactome" id="R-GGA-417076">
    <property type="pathway name" value="Assembly of telomerase and telomere extension"/>
</dbReference>
<dbReference type="PRO" id="PR:Q5ZJH9"/>
<dbReference type="Proteomes" id="UP000000539">
    <property type="component" value="Unassembled WGS sequence"/>
</dbReference>
<dbReference type="GO" id="GO:0031429">
    <property type="term" value="C:box H/ACA snoRNP complex"/>
    <property type="evidence" value="ECO:0000318"/>
    <property type="project" value="GO_Central"/>
</dbReference>
<dbReference type="GO" id="GO:0015030">
    <property type="term" value="C:Cajal body"/>
    <property type="evidence" value="ECO:0007669"/>
    <property type="project" value="UniProtKB-SubCell"/>
</dbReference>
<dbReference type="GO" id="GO:0005654">
    <property type="term" value="C:nucleoplasm"/>
    <property type="evidence" value="ECO:0000304"/>
    <property type="project" value="Reactome"/>
</dbReference>
<dbReference type="GO" id="GO:0005697">
    <property type="term" value="C:telomerase holoenzyme complex"/>
    <property type="evidence" value="ECO:0000250"/>
    <property type="project" value="UniProtKB"/>
</dbReference>
<dbReference type="GO" id="GO:0009982">
    <property type="term" value="F:pseudouridine synthase activity"/>
    <property type="evidence" value="ECO:0000250"/>
    <property type="project" value="UniProtKB"/>
</dbReference>
<dbReference type="GO" id="GO:0003723">
    <property type="term" value="F:RNA binding"/>
    <property type="evidence" value="ECO:0007669"/>
    <property type="project" value="UniProtKB-KW"/>
</dbReference>
<dbReference type="GO" id="GO:0000495">
    <property type="term" value="P:box H/ACA sno(s)RNA 3'-end processing"/>
    <property type="evidence" value="ECO:0000318"/>
    <property type="project" value="GO_Central"/>
</dbReference>
<dbReference type="GO" id="GO:0000455">
    <property type="term" value="P:enzyme-directed rRNA pseudouridine synthesis"/>
    <property type="evidence" value="ECO:0000250"/>
    <property type="project" value="UniProtKB"/>
</dbReference>
<dbReference type="GO" id="GO:1990481">
    <property type="term" value="P:mRNA pseudouridine synthesis"/>
    <property type="evidence" value="ECO:0000318"/>
    <property type="project" value="GO_Central"/>
</dbReference>
<dbReference type="GO" id="GO:0031118">
    <property type="term" value="P:rRNA pseudouridine synthesis"/>
    <property type="evidence" value="ECO:0000318"/>
    <property type="project" value="GO_Central"/>
</dbReference>
<dbReference type="GO" id="GO:0031120">
    <property type="term" value="P:snRNA pseudouridine synthesis"/>
    <property type="evidence" value="ECO:0000318"/>
    <property type="project" value="GO_Central"/>
</dbReference>
<dbReference type="GO" id="GO:0007004">
    <property type="term" value="P:telomere maintenance via telomerase"/>
    <property type="evidence" value="ECO:0000250"/>
    <property type="project" value="UniProtKB"/>
</dbReference>
<dbReference type="CDD" id="cd02572">
    <property type="entry name" value="PseudoU_synth_hDyskerin"/>
    <property type="match status" value="1"/>
</dbReference>
<dbReference type="CDD" id="cd21148">
    <property type="entry name" value="PUA_Cbf5"/>
    <property type="match status" value="1"/>
</dbReference>
<dbReference type="FunFam" id="3.30.2350.10:FF:000001">
    <property type="entry name" value="H/ACA ribonucleoprotein complex subunit CBF5"/>
    <property type="match status" value="1"/>
</dbReference>
<dbReference type="Gene3D" id="3.30.2350.10">
    <property type="entry name" value="Pseudouridine synthase"/>
    <property type="match status" value="1"/>
</dbReference>
<dbReference type="Gene3D" id="2.30.130.10">
    <property type="entry name" value="PUA domain"/>
    <property type="match status" value="1"/>
</dbReference>
<dbReference type="InterPro" id="IPR012960">
    <property type="entry name" value="Dyskerin-like"/>
</dbReference>
<dbReference type="InterPro" id="IPR020103">
    <property type="entry name" value="PsdUridine_synth_cat_dom_sf"/>
</dbReference>
<dbReference type="InterPro" id="IPR002501">
    <property type="entry name" value="PsdUridine_synth_N"/>
</dbReference>
<dbReference type="InterPro" id="IPR002478">
    <property type="entry name" value="PUA"/>
</dbReference>
<dbReference type="InterPro" id="IPR015947">
    <property type="entry name" value="PUA-like_sf"/>
</dbReference>
<dbReference type="InterPro" id="IPR036974">
    <property type="entry name" value="PUA_sf"/>
</dbReference>
<dbReference type="InterPro" id="IPR004802">
    <property type="entry name" value="tRNA_PsdUridine_synth_B_fam"/>
</dbReference>
<dbReference type="InterPro" id="IPR032819">
    <property type="entry name" value="TruB_C"/>
</dbReference>
<dbReference type="InterPro" id="IPR004521">
    <property type="entry name" value="Uncharacterised_CHP00451"/>
</dbReference>
<dbReference type="NCBIfam" id="TIGR00425">
    <property type="entry name" value="CBF5"/>
    <property type="match status" value="1"/>
</dbReference>
<dbReference type="NCBIfam" id="NF003280">
    <property type="entry name" value="PRK04270.1"/>
    <property type="match status" value="1"/>
</dbReference>
<dbReference type="NCBIfam" id="TIGR00451">
    <property type="entry name" value="unchar_dom_2"/>
    <property type="match status" value="1"/>
</dbReference>
<dbReference type="PANTHER" id="PTHR23127">
    <property type="entry name" value="CENTROMERE/MICROTUBULE BINDING PROTEIN CBF5"/>
    <property type="match status" value="1"/>
</dbReference>
<dbReference type="PANTHER" id="PTHR23127:SF0">
    <property type="entry name" value="H_ACA RIBONUCLEOPROTEIN COMPLEX SUBUNIT DKC1"/>
    <property type="match status" value="1"/>
</dbReference>
<dbReference type="Pfam" id="PF08068">
    <property type="entry name" value="DKCLD"/>
    <property type="match status" value="1"/>
</dbReference>
<dbReference type="Pfam" id="PF01472">
    <property type="entry name" value="PUA"/>
    <property type="match status" value="1"/>
</dbReference>
<dbReference type="Pfam" id="PF16198">
    <property type="entry name" value="TruB_C_2"/>
    <property type="match status" value="1"/>
</dbReference>
<dbReference type="Pfam" id="PF01509">
    <property type="entry name" value="TruB_N"/>
    <property type="match status" value="1"/>
</dbReference>
<dbReference type="SMART" id="SM01136">
    <property type="entry name" value="DKCLD"/>
    <property type="match status" value="1"/>
</dbReference>
<dbReference type="SMART" id="SM00359">
    <property type="entry name" value="PUA"/>
    <property type="match status" value="1"/>
</dbReference>
<dbReference type="SUPFAM" id="SSF55120">
    <property type="entry name" value="Pseudouridine synthase"/>
    <property type="match status" value="1"/>
</dbReference>
<dbReference type="SUPFAM" id="SSF88697">
    <property type="entry name" value="PUA domain-like"/>
    <property type="match status" value="1"/>
</dbReference>
<dbReference type="PROSITE" id="PS50890">
    <property type="entry name" value="PUA"/>
    <property type="match status" value="1"/>
</dbReference>
<proteinExistence type="evidence at transcript level"/>
<organism>
    <name type="scientific">Gallus gallus</name>
    <name type="common">Chicken</name>
    <dbReference type="NCBI Taxonomy" id="9031"/>
    <lineage>
        <taxon>Eukaryota</taxon>
        <taxon>Metazoa</taxon>
        <taxon>Chordata</taxon>
        <taxon>Craniata</taxon>
        <taxon>Vertebrata</taxon>
        <taxon>Euteleostomi</taxon>
        <taxon>Archelosauria</taxon>
        <taxon>Archosauria</taxon>
        <taxon>Dinosauria</taxon>
        <taxon>Saurischia</taxon>
        <taxon>Theropoda</taxon>
        <taxon>Coelurosauria</taxon>
        <taxon>Aves</taxon>
        <taxon>Neognathae</taxon>
        <taxon>Galloanserae</taxon>
        <taxon>Galliformes</taxon>
        <taxon>Phasianidae</taxon>
        <taxon>Phasianinae</taxon>
        <taxon>Gallus</taxon>
    </lineage>
</organism>
<accession>Q5ZJH9</accession>
<feature type="chain" id="PRO_0000121986" description="H/ACA ribonucleoprotein complex subunit DKC1">
    <location>
        <begin position="1"/>
        <end position="516"/>
    </location>
</feature>
<feature type="domain" description="PUA" evidence="5">
    <location>
        <begin position="294"/>
        <end position="369"/>
    </location>
</feature>
<feature type="region of interest" description="Disordered" evidence="6">
    <location>
        <begin position="1"/>
        <end position="24"/>
    </location>
</feature>
<feature type="region of interest" description="Disordered" evidence="6">
    <location>
        <begin position="422"/>
        <end position="516"/>
    </location>
</feature>
<feature type="coiled-coil region" evidence="4">
    <location>
        <begin position="463"/>
        <end position="516"/>
    </location>
</feature>
<feature type="compositionally biased region" description="Basic and acidic residues" evidence="6">
    <location>
        <begin position="434"/>
        <end position="446"/>
    </location>
</feature>
<feature type="compositionally biased region" description="Pro residues" evidence="6">
    <location>
        <begin position="453"/>
        <end position="464"/>
    </location>
</feature>
<feature type="compositionally biased region" description="Basic residues" evidence="6">
    <location>
        <begin position="469"/>
        <end position="478"/>
    </location>
</feature>
<feature type="active site" description="Nucleophile" evidence="3">
    <location>
        <position position="123"/>
    </location>
</feature>
<protein>
    <recommendedName>
        <fullName>H/ACA ribonucleoprotein complex subunit DKC1</fullName>
        <ecNumber evidence="1">5.4.99.-</ecNumber>
    </recommendedName>
    <alternativeName>
        <fullName>Dyskerin</fullName>
    </alternativeName>
</protein>
<comment type="function">
    <text evidence="1">Catalytic subunit of H/ACA small nucleolar ribonucleoprotein (H/ACA snoRNP) complex, which catalyzes pseudouridylation of rRNA. This involves the isomerization of uridine such that the ribose is subsequently attached to C5, instead of the normal N1. Each rRNA can contain up to 100 pseudouridine ('psi') residues, which may serve to stabilize the conformation of rRNAs. Required for ribosome biogenesis and telomere maintenance.</text>
</comment>
<comment type="catalytic activity">
    <reaction evidence="1">
        <text>uridine in 5S rRNA = pseudouridine in 5S rRNA</text>
        <dbReference type="Rhea" id="RHEA:47036"/>
        <dbReference type="Rhea" id="RHEA-COMP:11730"/>
        <dbReference type="Rhea" id="RHEA-COMP:11731"/>
        <dbReference type="ChEBI" id="CHEBI:65314"/>
        <dbReference type="ChEBI" id="CHEBI:65315"/>
    </reaction>
</comment>
<comment type="subunit">
    <text evidence="1">Part of the H/ACA small nucleolar ribonucleoprotein (H/ACA snoRNP) complex, which contains NHP2/NOLA2, GAR1/NOLA1, NOP10/NOLA3, and DKC1/NOLA4, which is presumed to be the catalytic subunit. The complex contains a stable core formed by binding of one or two NOP10-DKC1 heterodimers to NHP2; GAR1 subsequently binds to this core via DKC1. The complex binds a box H/ACA small nucleolar RNA (snoRNA), which may target the specific site of modification within the RNA substrate.</text>
</comment>
<comment type="subcellular location">
    <subcellularLocation>
        <location evidence="1">Nucleus</location>
        <location evidence="1">Nucleolus</location>
    </subcellularLocation>
    <subcellularLocation>
        <location evidence="2">Nucleus</location>
        <location evidence="2">Cajal body</location>
    </subcellularLocation>
</comment>
<comment type="similarity">
    <text evidence="7">Belongs to the pseudouridine synthase TruB family.</text>
</comment>